<comment type="function">
    <text evidence="1">The RuvA-RuvB-RuvC complex processes Holliday junction (HJ) DNA during genetic recombination and DNA repair, while the RuvA-RuvB complex plays an important role in the rescue of blocked DNA replication forks via replication fork reversal (RFR). RuvA specifically binds to HJ cruciform DNA, conferring on it an open structure. The RuvB hexamer acts as an ATP-dependent pump, pulling dsDNA into and through the RuvAB complex. HJ branch migration allows RuvC to scan DNA until it finds its consensus sequence, where it cleaves and resolves the cruciform DNA.</text>
</comment>
<comment type="subunit">
    <text evidence="1">Homotetramer. Forms an RuvA(8)-RuvB(12)-Holliday junction (HJ) complex. HJ DNA is sandwiched between 2 RuvA tetramers; dsDNA enters through RuvA and exits via RuvB. An RuvB hexamer assembles on each DNA strand where it exits the tetramer. Each RuvB hexamer is contacted by two RuvA subunits (via domain III) on 2 adjacent RuvB subunits; this complex drives branch migration. In the full resolvosome a probable DNA-RuvA(4)-RuvB(12)-RuvC(2) complex forms which resolves the HJ.</text>
</comment>
<comment type="subcellular location">
    <subcellularLocation>
        <location evidence="1">Cytoplasm</location>
    </subcellularLocation>
</comment>
<comment type="domain">
    <text evidence="1">Has three domains with a flexible linker between the domains II and III and assumes an 'L' shape. Domain III is highly mobile and contacts RuvB.</text>
</comment>
<comment type="similarity">
    <text evidence="1">Belongs to the RuvA family.</text>
</comment>
<gene>
    <name evidence="1" type="primary">ruvA</name>
    <name type="ordered locus">SSPA0908</name>
</gene>
<sequence>MIGRLRGIILEKQPPIVLLETGGVGYEVHMPMTCFYELPEAGQEAIVFTHFVVREDAQLLYGFNNKQERTLFKELIKTNGVGPKLALAILSGMSAQQFVNAVEREELGALVKLPGIGKKTAERLIVEMKDRFKGLHGDLFTPAVDLVLTSPASPTSEDAEQEAVAALVALGYKPQEASRMVSKIARPDASSETLIRDALRAAL</sequence>
<proteinExistence type="inferred from homology"/>
<feature type="chain" id="PRO_1000090367" description="Holliday junction branch migration complex subunit RuvA">
    <location>
        <begin position="1"/>
        <end position="203"/>
    </location>
</feature>
<feature type="region of interest" description="Domain I" evidence="1">
    <location>
        <begin position="1"/>
        <end position="64"/>
    </location>
</feature>
<feature type="region of interest" description="Domain II" evidence="1">
    <location>
        <begin position="65"/>
        <end position="142"/>
    </location>
</feature>
<feature type="region of interest" description="Flexible linker" evidence="1">
    <location>
        <begin position="143"/>
        <end position="154"/>
    </location>
</feature>
<feature type="region of interest" description="Domain III" evidence="1">
    <location>
        <begin position="155"/>
        <end position="203"/>
    </location>
</feature>
<accession>B5BH60</accession>
<organism>
    <name type="scientific">Salmonella paratyphi A (strain AKU_12601)</name>
    <dbReference type="NCBI Taxonomy" id="554290"/>
    <lineage>
        <taxon>Bacteria</taxon>
        <taxon>Pseudomonadati</taxon>
        <taxon>Pseudomonadota</taxon>
        <taxon>Gammaproteobacteria</taxon>
        <taxon>Enterobacterales</taxon>
        <taxon>Enterobacteriaceae</taxon>
        <taxon>Salmonella</taxon>
    </lineage>
</organism>
<name>RUVA_SALPK</name>
<keyword id="KW-0963">Cytoplasm</keyword>
<keyword id="KW-0227">DNA damage</keyword>
<keyword id="KW-0233">DNA recombination</keyword>
<keyword id="KW-0234">DNA repair</keyword>
<keyword id="KW-0238">DNA-binding</keyword>
<evidence type="ECO:0000255" key="1">
    <source>
        <dbReference type="HAMAP-Rule" id="MF_00031"/>
    </source>
</evidence>
<dbReference type="EMBL" id="FM200053">
    <property type="protein sequence ID" value="CAR59052.1"/>
    <property type="molecule type" value="Genomic_DNA"/>
</dbReference>
<dbReference type="RefSeq" id="WP_000580335.1">
    <property type="nucleotide sequence ID" value="NC_011147.1"/>
</dbReference>
<dbReference type="SMR" id="B5BH60"/>
<dbReference type="KEGG" id="sek:SSPA0908"/>
<dbReference type="HOGENOM" id="CLU_087936_0_0_6"/>
<dbReference type="Proteomes" id="UP000001869">
    <property type="component" value="Chromosome"/>
</dbReference>
<dbReference type="GO" id="GO:0005737">
    <property type="term" value="C:cytoplasm"/>
    <property type="evidence" value="ECO:0007669"/>
    <property type="project" value="UniProtKB-SubCell"/>
</dbReference>
<dbReference type="GO" id="GO:0009379">
    <property type="term" value="C:Holliday junction helicase complex"/>
    <property type="evidence" value="ECO:0007669"/>
    <property type="project" value="InterPro"/>
</dbReference>
<dbReference type="GO" id="GO:0048476">
    <property type="term" value="C:Holliday junction resolvase complex"/>
    <property type="evidence" value="ECO:0007669"/>
    <property type="project" value="UniProtKB-UniRule"/>
</dbReference>
<dbReference type="GO" id="GO:0005524">
    <property type="term" value="F:ATP binding"/>
    <property type="evidence" value="ECO:0007669"/>
    <property type="project" value="InterPro"/>
</dbReference>
<dbReference type="GO" id="GO:0000400">
    <property type="term" value="F:four-way junction DNA binding"/>
    <property type="evidence" value="ECO:0007669"/>
    <property type="project" value="UniProtKB-UniRule"/>
</dbReference>
<dbReference type="GO" id="GO:0009378">
    <property type="term" value="F:four-way junction helicase activity"/>
    <property type="evidence" value="ECO:0007669"/>
    <property type="project" value="InterPro"/>
</dbReference>
<dbReference type="GO" id="GO:0006310">
    <property type="term" value="P:DNA recombination"/>
    <property type="evidence" value="ECO:0007669"/>
    <property type="project" value="UniProtKB-UniRule"/>
</dbReference>
<dbReference type="GO" id="GO:0006281">
    <property type="term" value="P:DNA repair"/>
    <property type="evidence" value="ECO:0007669"/>
    <property type="project" value="UniProtKB-UniRule"/>
</dbReference>
<dbReference type="CDD" id="cd14332">
    <property type="entry name" value="UBA_RuvA_C"/>
    <property type="match status" value="1"/>
</dbReference>
<dbReference type="FunFam" id="1.10.150.20:FF:000012">
    <property type="entry name" value="Holliday junction ATP-dependent DNA helicase RuvA"/>
    <property type="match status" value="1"/>
</dbReference>
<dbReference type="FunFam" id="1.10.8.10:FF:000008">
    <property type="entry name" value="Holliday junction ATP-dependent DNA helicase RuvA"/>
    <property type="match status" value="1"/>
</dbReference>
<dbReference type="FunFam" id="2.40.50.140:FF:000083">
    <property type="entry name" value="Holliday junction ATP-dependent DNA helicase RuvA"/>
    <property type="match status" value="1"/>
</dbReference>
<dbReference type="Gene3D" id="1.10.150.20">
    <property type="entry name" value="5' to 3' exonuclease, C-terminal subdomain"/>
    <property type="match status" value="1"/>
</dbReference>
<dbReference type="Gene3D" id="1.10.8.10">
    <property type="entry name" value="DNA helicase RuvA subunit, C-terminal domain"/>
    <property type="match status" value="1"/>
</dbReference>
<dbReference type="Gene3D" id="2.40.50.140">
    <property type="entry name" value="Nucleic acid-binding proteins"/>
    <property type="match status" value="1"/>
</dbReference>
<dbReference type="HAMAP" id="MF_00031">
    <property type="entry name" value="DNA_HJ_migration_RuvA"/>
    <property type="match status" value="1"/>
</dbReference>
<dbReference type="InterPro" id="IPR013849">
    <property type="entry name" value="DNA_helicase_Holl-junc_RuvA_I"/>
</dbReference>
<dbReference type="InterPro" id="IPR003583">
    <property type="entry name" value="Hlx-hairpin-Hlx_DNA-bd_motif"/>
</dbReference>
<dbReference type="InterPro" id="IPR012340">
    <property type="entry name" value="NA-bd_OB-fold"/>
</dbReference>
<dbReference type="InterPro" id="IPR000085">
    <property type="entry name" value="RuvA"/>
</dbReference>
<dbReference type="InterPro" id="IPR010994">
    <property type="entry name" value="RuvA_2-like"/>
</dbReference>
<dbReference type="InterPro" id="IPR011114">
    <property type="entry name" value="RuvA_C"/>
</dbReference>
<dbReference type="InterPro" id="IPR036267">
    <property type="entry name" value="RuvA_C_sf"/>
</dbReference>
<dbReference type="NCBIfam" id="TIGR00084">
    <property type="entry name" value="ruvA"/>
    <property type="match status" value="1"/>
</dbReference>
<dbReference type="Pfam" id="PF14520">
    <property type="entry name" value="HHH_5"/>
    <property type="match status" value="1"/>
</dbReference>
<dbReference type="Pfam" id="PF07499">
    <property type="entry name" value="RuvA_C"/>
    <property type="match status" value="1"/>
</dbReference>
<dbReference type="Pfam" id="PF01330">
    <property type="entry name" value="RuvA_N"/>
    <property type="match status" value="1"/>
</dbReference>
<dbReference type="SMART" id="SM00278">
    <property type="entry name" value="HhH1"/>
    <property type="match status" value="2"/>
</dbReference>
<dbReference type="SUPFAM" id="SSF46929">
    <property type="entry name" value="DNA helicase RuvA subunit, C-terminal domain"/>
    <property type="match status" value="1"/>
</dbReference>
<dbReference type="SUPFAM" id="SSF50249">
    <property type="entry name" value="Nucleic acid-binding proteins"/>
    <property type="match status" value="1"/>
</dbReference>
<dbReference type="SUPFAM" id="SSF47781">
    <property type="entry name" value="RuvA domain 2-like"/>
    <property type="match status" value="1"/>
</dbReference>
<protein>
    <recommendedName>
        <fullName evidence="1">Holliday junction branch migration complex subunit RuvA</fullName>
    </recommendedName>
</protein>
<reference key="1">
    <citation type="journal article" date="2009" name="BMC Genomics">
        <title>Pseudogene accumulation in the evolutionary histories of Salmonella enterica serovars Paratyphi A and Typhi.</title>
        <authorList>
            <person name="Holt K.E."/>
            <person name="Thomson N.R."/>
            <person name="Wain J."/>
            <person name="Langridge G.C."/>
            <person name="Hasan R."/>
            <person name="Bhutta Z.A."/>
            <person name="Quail M.A."/>
            <person name="Norbertczak H."/>
            <person name="Walker D."/>
            <person name="Simmonds M."/>
            <person name="White B."/>
            <person name="Bason N."/>
            <person name="Mungall K."/>
            <person name="Dougan G."/>
            <person name="Parkhill J."/>
        </authorList>
    </citation>
    <scope>NUCLEOTIDE SEQUENCE [LARGE SCALE GENOMIC DNA]</scope>
    <source>
        <strain>AKU_12601</strain>
    </source>
</reference>